<comment type="function">
    <text evidence="1">Specifically methylates the uridine in position 2552 of 23S rRNA at the 2'-O position of the ribose in the fully assembled 50S ribosomal subunit.</text>
</comment>
<comment type="catalytic activity">
    <reaction evidence="1">
        <text>uridine(2552) in 23S rRNA + S-adenosyl-L-methionine = 2'-O-methyluridine(2552) in 23S rRNA + S-adenosyl-L-homocysteine + H(+)</text>
        <dbReference type="Rhea" id="RHEA:42720"/>
        <dbReference type="Rhea" id="RHEA-COMP:10202"/>
        <dbReference type="Rhea" id="RHEA-COMP:10203"/>
        <dbReference type="ChEBI" id="CHEBI:15378"/>
        <dbReference type="ChEBI" id="CHEBI:57856"/>
        <dbReference type="ChEBI" id="CHEBI:59789"/>
        <dbReference type="ChEBI" id="CHEBI:65315"/>
        <dbReference type="ChEBI" id="CHEBI:74478"/>
        <dbReference type="EC" id="2.1.1.166"/>
    </reaction>
</comment>
<comment type="subcellular location">
    <subcellularLocation>
        <location evidence="1">Cytoplasm</location>
    </subcellularLocation>
</comment>
<comment type="similarity">
    <text evidence="1">Belongs to the class I-like SAM-binding methyltransferase superfamily. RNA methyltransferase RlmE family.</text>
</comment>
<dbReference type="EC" id="2.1.1.166" evidence="1"/>
<dbReference type="EMBL" id="CP001635">
    <property type="protein sequence ID" value="ACS19248.1"/>
    <property type="molecule type" value="Genomic_DNA"/>
</dbReference>
<dbReference type="SMR" id="C5CKU4"/>
<dbReference type="STRING" id="543728.Vapar_2623"/>
<dbReference type="KEGG" id="vap:Vapar_2623"/>
<dbReference type="eggNOG" id="COG0293">
    <property type="taxonomic scope" value="Bacteria"/>
</dbReference>
<dbReference type="HOGENOM" id="CLU_009422_4_1_4"/>
<dbReference type="OrthoDB" id="9790080at2"/>
<dbReference type="GO" id="GO:0005737">
    <property type="term" value="C:cytoplasm"/>
    <property type="evidence" value="ECO:0007669"/>
    <property type="project" value="UniProtKB-SubCell"/>
</dbReference>
<dbReference type="GO" id="GO:0008650">
    <property type="term" value="F:rRNA (uridine-2'-O-)-methyltransferase activity"/>
    <property type="evidence" value="ECO:0007669"/>
    <property type="project" value="UniProtKB-UniRule"/>
</dbReference>
<dbReference type="CDD" id="cd02440">
    <property type="entry name" value="AdoMet_MTases"/>
    <property type="match status" value="1"/>
</dbReference>
<dbReference type="FunFam" id="3.40.50.150:FF:000005">
    <property type="entry name" value="Ribosomal RNA large subunit methyltransferase E"/>
    <property type="match status" value="1"/>
</dbReference>
<dbReference type="Gene3D" id="3.40.50.150">
    <property type="entry name" value="Vaccinia Virus protein VP39"/>
    <property type="match status" value="1"/>
</dbReference>
<dbReference type="HAMAP" id="MF_01547">
    <property type="entry name" value="RNA_methyltr_E"/>
    <property type="match status" value="1"/>
</dbReference>
<dbReference type="InterPro" id="IPR050082">
    <property type="entry name" value="RNA_methyltr_RlmE"/>
</dbReference>
<dbReference type="InterPro" id="IPR002877">
    <property type="entry name" value="RNA_MeTrfase_FtsJ_dom"/>
</dbReference>
<dbReference type="InterPro" id="IPR015507">
    <property type="entry name" value="rRNA-MeTfrase_E"/>
</dbReference>
<dbReference type="InterPro" id="IPR029063">
    <property type="entry name" value="SAM-dependent_MTases_sf"/>
</dbReference>
<dbReference type="PANTHER" id="PTHR10920">
    <property type="entry name" value="RIBOSOMAL RNA METHYLTRANSFERASE"/>
    <property type="match status" value="1"/>
</dbReference>
<dbReference type="PANTHER" id="PTHR10920:SF18">
    <property type="entry name" value="RRNA METHYLTRANSFERASE 2, MITOCHONDRIAL"/>
    <property type="match status" value="1"/>
</dbReference>
<dbReference type="Pfam" id="PF01728">
    <property type="entry name" value="FtsJ"/>
    <property type="match status" value="1"/>
</dbReference>
<dbReference type="PIRSF" id="PIRSF005461">
    <property type="entry name" value="23S_rRNA_mtase"/>
    <property type="match status" value="1"/>
</dbReference>
<dbReference type="SUPFAM" id="SSF53335">
    <property type="entry name" value="S-adenosyl-L-methionine-dependent methyltransferases"/>
    <property type="match status" value="1"/>
</dbReference>
<organism>
    <name type="scientific">Variovorax paradoxus (strain S110)</name>
    <dbReference type="NCBI Taxonomy" id="543728"/>
    <lineage>
        <taxon>Bacteria</taxon>
        <taxon>Pseudomonadati</taxon>
        <taxon>Pseudomonadota</taxon>
        <taxon>Betaproteobacteria</taxon>
        <taxon>Burkholderiales</taxon>
        <taxon>Comamonadaceae</taxon>
        <taxon>Variovorax</taxon>
    </lineage>
</organism>
<reference key="1">
    <citation type="journal article" date="2011" name="J. Bacteriol.">
        <title>Complete genome sequence of the metabolically versatile plant growth-promoting endophyte, Variovorax paradoxus S110.</title>
        <authorList>
            <person name="Han J.I."/>
            <person name="Choi H.K."/>
            <person name="Lee S.W."/>
            <person name="Orwin P.M."/>
            <person name="Kim J."/>
            <person name="Laroe S.L."/>
            <person name="Kim T.G."/>
            <person name="O'Neil J."/>
            <person name="Leadbetter J.R."/>
            <person name="Lee S.Y."/>
            <person name="Hur C.G."/>
            <person name="Spain J.C."/>
            <person name="Ovchinnikova G."/>
            <person name="Goodwin L."/>
            <person name="Han C."/>
        </authorList>
    </citation>
    <scope>NUCLEOTIDE SEQUENCE [LARGE SCALE GENOMIC DNA]</scope>
    <source>
        <strain>S110</strain>
    </source>
</reference>
<sequence>MSTKAKSKKVNKAWLHDHINDPYVKLATREGYRARAAYKLKEIDESLGLVKPGQLVVDLGSTPGAWSQYLRRRMSPEGAAAGELNGTIIALDILPMEPIEGVTFLQGDFREAELLEQVLGVLAGRKADLVVSDMAPNLSGIHSADAARVAHLIELAIDFAQHHLKPEGALVAKLFHGSGYDELVKLFKANFRTVKPFKPKASRDKSSETFLVGMGLKAQETL</sequence>
<name>RLME_VARPS</name>
<feature type="chain" id="PRO_1000215460" description="Ribosomal RNA large subunit methyltransferase E">
    <location>
        <begin position="1"/>
        <end position="222"/>
    </location>
</feature>
<feature type="active site" description="Proton acceptor" evidence="1">
    <location>
        <position position="173"/>
    </location>
</feature>
<feature type="binding site" evidence="1">
    <location>
        <position position="64"/>
    </location>
    <ligand>
        <name>S-adenosyl-L-methionine</name>
        <dbReference type="ChEBI" id="CHEBI:59789"/>
    </ligand>
</feature>
<feature type="binding site" evidence="1">
    <location>
        <position position="66"/>
    </location>
    <ligand>
        <name>S-adenosyl-L-methionine</name>
        <dbReference type="ChEBI" id="CHEBI:59789"/>
    </ligand>
</feature>
<feature type="binding site" evidence="1">
    <location>
        <position position="92"/>
    </location>
    <ligand>
        <name>S-adenosyl-L-methionine</name>
        <dbReference type="ChEBI" id="CHEBI:59789"/>
    </ligand>
</feature>
<feature type="binding site" evidence="1">
    <location>
        <position position="108"/>
    </location>
    <ligand>
        <name>S-adenosyl-L-methionine</name>
        <dbReference type="ChEBI" id="CHEBI:59789"/>
    </ligand>
</feature>
<feature type="binding site" evidence="1">
    <location>
        <position position="133"/>
    </location>
    <ligand>
        <name>S-adenosyl-L-methionine</name>
        <dbReference type="ChEBI" id="CHEBI:59789"/>
    </ligand>
</feature>
<keyword id="KW-0963">Cytoplasm</keyword>
<keyword id="KW-0489">Methyltransferase</keyword>
<keyword id="KW-0698">rRNA processing</keyword>
<keyword id="KW-0949">S-adenosyl-L-methionine</keyword>
<keyword id="KW-0808">Transferase</keyword>
<evidence type="ECO:0000255" key="1">
    <source>
        <dbReference type="HAMAP-Rule" id="MF_01547"/>
    </source>
</evidence>
<accession>C5CKU4</accession>
<proteinExistence type="inferred from homology"/>
<gene>
    <name evidence="1" type="primary">rlmE</name>
    <name evidence="1" type="synonym">ftsJ</name>
    <name evidence="1" type="synonym">rrmJ</name>
    <name type="ordered locus">Vapar_2623</name>
</gene>
<protein>
    <recommendedName>
        <fullName evidence="1">Ribosomal RNA large subunit methyltransferase E</fullName>
        <ecNumber evidence="1">2.1.1.166</ecNumber>
    </recommendedName>
    <alternativeName>
        <fullName evidence="1">23S rRNA Um2552 methyltransferase</fullName>
    </alternativeName>
    <alternativeName>
        <fullName evidence="1">rRNA (uridine-2'-O-)-methyltransferase</fullName>
    </alternativeName>
</protein>